<gene>
    <name type="primary">nhr-5</name>
    <name type="ORF">Y73F8A.21</name>
</gene>
<proteinExistence type="inferred from homology"/>
<reference key="1">
    <citation type="journal article" date="1998" name="Science">
        <title>Genome sequence of the nematode C. elegans: a platform for investigating biology.</title>
        <authorList>
            <consortium name="The C. elegans sequencing consortium"/>
        </authorList>
    </citation>
    <scope>NUCLEOTIDE SEQUENCE [LARGE SCALE GENOMIC DNA]</scope>
    <source>
        <strain>Bristol N2</strain>
    </source>
</reference>
<reference key="2">
    <citation type="journal article" date="1999" name="Genome Res.">
        <title>The nuclear receptor superfamily has undergone extensive proliferation and diversification in nematodes.</title>
        <authorList>
            <person name="Sluder A.E."/>
            <person name="Mathews S.W."/>
            <person name="Hough D."/>
            <person name="Yin V.P."/>
            <person name="Maina C.V."/>
        </authorList>
    </citation>
    <scope>IDENTIFICATION</scope>
</reference>
<feature type="chain" id="PRO_0000053759" description="Nuclear hormone receptor family member nhr-5">
    <location>
        <begin position="1"/>
        <end position="672"/>
    </location>
</feature>
<feature type="domain" description="NR LBD" evidence="2">
    <location>
        <begin position="155"/>
        <end position="424"/>
    </location>
</feature>
<feature type="DNA-binding region" description="Nuclear receptor" evidence="1">
    <location>
        <begin position="40"/>
        <end position="115"/>
    </location>
</feature>
<feature type="zinc finger region" description="NR C4-type" evidence="1">
    <location>
        <begin position="43"/>
        <end position="63"/>
    </location>
</feature>
<feature type="zinc finger region" description="NR C4-type" evidence="1">
    <location>
        <begin position="79"/>
        <end position="98"/>
    </location>
</feature>
<feature type="region of interest" description="Disordered" evidence="3">
    <location>
        <begin position="1"/>
        <end position="38"/>
    </location>
</feature>
<feature type="region of interest" description="Disordered" evidence="3">
    <location>
        <begin position="550"/>
        <end position="577"/>
    </location>
</feature>
<feature type="compositionally biased region" description="Low complexity" evidence="3">
    <location>
        <begin position="1"/>
        <end position="19"/>
    </location>
</feature>
<feature type="compositionally biased region" description="Low complexity" evidence="3">
    <location>
        <begin position="562"/>
        <end position="577"/>
    </location>
</feature>
<dbReference type="EMBL" id="AL132862">
    <property type="protein sequence ID" value="CAB60549.2"/>
    <property type="molecule type" value="Genomic_DNA"/>
</dbReference>
<dbReference type="RefSeq" id="NP_001379260.1">
    <property type="nucleotide sequence ID" value="NM_001392445.1"/>
</dbReference>
<dbReference type="RefSeq" id="NP_502856.2">
    <property type="nucleotide sequence ID" value="NM_070455.2"/>
</dbReference>
<dbReference type="SMR" id="Q9NA51"/>
<dbReference type="BioGRID" id="56213">
    <property type="interactions" value="22"/>
</dbReference>
<dbReference type="IntAct" id="Q9NA51">
    <property type="interactions" value="21"/>
</dbReference>
<dbReference type="STRING" id="6239.Y73F8A.21c.1"/>
<dbReference type="PaxDb" id="6239-Y73F8A.21a"/>
<dbReference type="EnsemblMetazoa" id="Y73F8A.21a.1">
    <property type="protein sequence ID" value="Y73F8A.21a.1"/>
    <property type="gene ID" value="WBGene00003604"/>
</dbReference>
<dbReference type="GeneID" id="191717"/>
<dbReference type="UCSC" id="Y73F8A.21">
    <property type="organism name" value="c. elegans"/>
</dbReference>
<dbReference type="AGR" id="WB:WBGene00003604"/>
<dbReference type="WormBase" id="Y73F8A.21a">
    <property type="protein sequence ID" value="CE46694"/>
    <property type="gene ID" value="WBGene00003604"/>
    <property type="gene designation" value="nhr-5"/>
</dbReference>
<dbReference type="eggNOG" id="KOG3575">
    <property type="taxonomic scope" value="Eukaryota"/>
</dbReference>
<dbReference type="GeneTree" id="ENSGT00940000153391"/>
<dbReference type="HOGENOM" id="CLU_420495_0_0_1"/>
<dbReference type="InParanoid" id="Q9NA51"/>
<dbReference type="PhylomeDB" id="Q9NA51"/>
<dbReference type="PRO" id="PR:Q9NA51"/>
<dbReference type="Proteomes" id="UP000001940">
    <property type="component" value="Chromosome IV"/>
</dbReference>
<dbReference type="Bgee" id="WBGene00003604">
    <property type="expression patterns" value="Expressed in larva and 3 other cell types or tissues"/>
</dbReference>
<dbReference type="ExpressionAtlas" id="Q9NA51">
    <property type="expression patterns" value="baseline and differential"/>
</dbReference>
<dbReference type="GO" id="GO:0005634">
    <property type="term" value="C:nucleus"/>
    <property type="evidence" value="ECO:0007669"/>
    <property type="project" value="UniProtKB-SubCell"/>
</dbReference>
<dbReference type="GO" id="GO:0003700">
    <property type="term" value="F:DNA-binding transcription factor activity"/>
    <property type="evidence" value="ECO:0007669"/>
    <property type="project" value="InterPro"/>
</dbReference>
<dbReference type="GO" id="GO:0000978">
    <property type="term" value="F:RNA polymerase II cis-regulatory region sequence-specific DNA binding"/>
    <property type="evidence" value="ECO:0007669"/>
    <property type="project" value="InterPro"/>
</dbReference>
<dbReference type="GO" id="GO:0008270">
    <property type="term" value="F:zinc ion binding"/>
    <property type="evidence" value="ECO:0007669"/>
    <property type="project" value="UniProtKB-KW"/>
</dbReference>
<dbReference type="CDD" id="cd06960">
    <property type="entry name" value="NR_DBD_HNF4A"/>
    <property type="match status" value="1"/>
</dbReference>
<dbReference type="FunFam" id="3.30.50.10:FF:000030">
    <property type="entry name" value="Nuclear Hormone Receptor family"/>
    <property type="match status" value="1"/>
</dbReference>
<dbReference type="Gene3D" id="3.30.50.10">
    <property type="entry name" value="Erythroid Transcription Factor GATA-1, subunit A"/>
    <property type="match status" value="1"/>
</dbReference>
<dbReference type="Gene3D" id="1.10.565.10">
    <property type="entry name" value="Retinoid X Receptor"/>
    <property type="match status" value="1"/>
</dbReference>
<dbReference type="InterPro" id="IPR049636">
    <property type="entry name" value="HNF4-like_DBD"/>
</dbReference>
<dbReference type="InterPro" id="IPR035500">
    <property type="entry name" value="NHR-like_dom_sf"/>
</dbReference>
<dbReference type="InterPro" id="IPR000536">
    <property type="entry name" value="Nucl_hrmn_rcpt_lig-bd"/>
</dbReference>
<dbReference type="InterPro" id="IPR052496">
    <property type="entry name" value="Orphan_Nuclear_Rcpt"/>
</dbReference>
<dbReference type="InterPro" id="IPR001628">
    <property type="entry name" value="Znf_hrmn_rcpt"/>
</dbReference>
<dbReference type="InterPro" id="IPR013088">
    <property type="entry name" value="Znf_NHR/GATA"/>
</dbReference>
<dbReference type="PANTHER" id="PTHR47519">
    <property type="entry name" value="NUCLEAR HORMONE RECEPTOR FAMILY MEMBER NHR-31-RELATED"/>
    <property type="match status" value="1"/>
</dbReference>
<dbReference type="PANTHER" id="PTHR47519:SF3">
    <property type="entry name" value="NUCLEAR HORMONE RECEPTOR FAMILY MEMBER NHR-5"/>
    <property type="match status" value="1"/>
</dbReference>
<dbReference type="Pfam" id="PF00104">
    <property type="entry name" value="Hormone_recep"/>
    <property type="match status" value="1"/>
</dbReference>
<dbReference type="Pfam" id="PF00105">
    <property type="entry name" value="zf-C4"/>
    <property type="match status" value="1"/>
</dbReference>
<dbReference type="PRINTS" id="PR00047">
    <property type="entry name" value="STROIDFINGER"/>
</dbReference>
<dbReference type="SMART" id="SM00430">
    <property type="entry name" value="HOLI"/>
    <property type="match status" value="1"/>
</dbReference>
<dbReference type="SMART" id="SM00399">
    <property type="entry name" value="ZnF_C4"/>
    <property type="match status" value="1"/>
</dbReference>
<dbReference type="SUPFAM" id="SSF57716">
    <property type="entry name" value="Glucocorticoid receptor-like (DNA-binding domain)"/>
    <property type="match status" value="1"/>
</dbReference>
<dbReference type="SUPFAM" id="SSF48508">
    <property type="entry name" value="Nuclear receptor ligand-binding domain"/>
    <property type="match status" value="1"/>
</dbReference>
<dbReference type="PROSITE" id="PS51843">
    <property type="entry name" value="NR_LBD"/>
    <property type="match status" value="1"/>
</dbReference>
<dbReference type="PROSITE" id="PS00031">
    <property type="entry name" value="NUCLEAR_REC_DBD_1"/>
    <property type="match status" value="1"/>
</dbReference>
<dbReference type="PROSITE" id="PS51030">
    <property type="entry name" value="NUCLEAR_REC_DBD_2"/>
    <property type="match status" value="1"/>
</dbReference>
<sequence>MSSGGNSSNVNRNSGSSNVITLNDSDEETEDSNLGSSSSTNLCKVCGAEKAALHYGALSCVGCKGFFRRALLKADQLECAANGECTVSVLQKTQCRSCRFNKCLREGMNPAYVRPNRDAPPKPRKPTTTVATCDQTDRGRTTKSREEWMKKMTVEMRTILMTLLNIETKVMKGDTQQEASKLYPLKGIDKLSDIIETPIQLKGKRTEMRYEAYRMAGNDELCAIAYRRLIAAIDWVESLSPLLGHLTPQDKIALVKSSFAPLMVFNFCARTAEACQDENVLCLCNFAYVPRNISKMYEDTYHLGNGLVERALNELVAVYREYGMREEEIVCVNAMICLNPLAKDVSDSLFEKIVELRNRIADCLFSIVKEVRLSPTPNVCYGHILLSLATVTELANAMSENLQFAQTFSNQGEIPLLTDLFGCFTVEPFFKEVDELAAMSLEKAKAEKKKEMSTQTDRLPPPRALLKRQATIDEDSEEPARQNFRLLQPPNNFYITEMLDDLRNNHAENHLISLNFDASNVSNAIASRPSFEDLGTVPSGSTVTRRIGSNIQGPSHLPQCGSTVTQRPTVPSSTTSSTFYNFPPPPGYPPLNAGYTPNVNYPNLYQQPQYFQNFQQNNYPSQVMEQQNYGNVESTSYPFPRNDGFVYNHPNIPYSHHNNSLQQNNFHNQYAN</sequence>
<name>NHR5_CAEEL</name>
<organism>
    <name type="scientific">Caenorhabditis elegans</name>
    <dbReference type="NCBI Taxonomy" id="6239"/>
    <lineage>
        <taxon>Eukaryota</taxon>
        <taxon>Metazoa</taxon>
        <taxon>Ecdysozoa</taxon>
        <taxon>Nematoda</taxon>
        <taxon>Chromadorea</taxon>
        <taxon>Rhabditida</taxon>
        <taxon>Rhabditina</taxon>
        <taxon>Rhabditomorpha</taxon>
        <taxon>Rhabditoidea</taxon>
        <taxon>Rhabditidae</taxon>
        <taxon>Peloderinae</taxon>
        <taxon>Caenorhabditis</taxon>
    </lineage>
</organism>
<keyword id="KW-0238">DNA-binding</keyword>
<keyword id="KW-0479">Metal-binding</keyword>
<keyword id="KW-0539">Nucleus</keyword>
<keyword id="KW-0675">Receptor</keyword>
<keyword id="KW-1185">Reference proteome</keyword>
<keyword id="KW-0804">Transcription</keyword>
<keyword id="KW-0805">Transcription regulation</keyword>
<keyword id="KW-0862">Zinc</keyword>
<keyword id="KW-0863">Zinc-finger</keyword>
<protein>
    <recommendedName>
        <fullName>Nuclear hormone receptor family member nhr-5</fullName>
    </recommendedName>
</protein>
<accession>Q9NA51</accession>
<evidence type="ECO:0000255" key="1">
    <source>
        <dbReference type="PROSITE-ProRule" id="PRU00407"/>
    </source>
</evidence>
<evidence type="ECO:0000255" key="2">
    <source>
        <dbReference type="PROSITE-ProRule" id="PRU01189"/>
    </source>
</evidence>
<evidence type="ECO:0000256" key="3">
    <source>
        <dbReference type="SAM" id="MobiDB-lite"/>
    </source>
</evidence>
<evidence type="ECO:0000305" key="4"/>
<comment type="function">
    <text>Orphan nuclear receptor.</text>
</comment>
<comment type="subcellular location">
    <subcellularLocation>
        <location evidence="1">Nucleus</location>
    </subcellularLocation>
</comment>
<comment type="similarity">
    <text evidence="4">Belongs to the nuclear hormone receptor family.</text>
</comment>